<protein>
    <recommendedName>
        <fullName>T-complex protein 1 subunit theta</fullName>
        <shortName>TCP-1-theta</shortName>
        <ecNumber evidence="2">3.6.1.-</ecNumber>
    </recommendedName>
    <alternativeName>
        <fullName>CCT-theta</fullName>
    </alternativeName>
</protein>
<dbReference type="EC" id="3.6.1.-" evidence="2"/>
<dbReference type="EMBL" id="AB168763">
    <property type="protein sequence ID" value="BAE00870.1"/>
    <property type="molecule type" value="mRNA"/>
</dbReference>
<dbReference type="EMBL" id="AB169553">
    <property type="protein sequence ID" value="BAE01635.1"/>
    <property type="molecule type" value="mRNA"/>
</dbReference>
<dbReference type="RefSeq" id="NP_001270137.1">
    <property type="nucleotide sequence ID" value="NM_001283208.1"/>
</dbReference>
<dbReference type="RefSeq" id="XP_045245154.2">
    <property type="nucleotide sequence ID" value="XM_045389219.2"/>
</dbReference>
<dbReference type="SMR" id="Q4R5J0"/>
<dbReference type="STRING" id="9541.ENSMFAP00000021489"/>
<dbReference type="GeneID" id="101864979"/>
<dbReference type="VEuPathDB" id="HostDB:ENSMFAG00000035602"/>
<dbReference type="eggNOG" id="KOG0362">
    <property type="taxonomic scope" value="Eukaryota"/>
</dbReference>
<dbReference type="Proteomes" id="UP000233100">
    <property type="component" value="Chromosome 3"/>
</dbReference>
<dbReference type="GO" id="GO:0005813">
    <property type="term" value="C:centrosome"/>
    <property type="evidence" value="ECO:0007669"/>
    <property type="project" value="UniProtKB-SubCell"/>
</dbReference>
<dbReference type="GO" id="GO:0005832">
    <property type="term" value="C:chaperonin-containing T-complex"/>
    <property type="evidence" value="ECO:0000250"/>
    <property type="project" value="UniProtKB"/>
</dbReference>
<dbReference type="GO" id="GO:0005929">
    <property type="term" value="C:cilium"/>
    <property type="evidence" value="ECO:0007669"/>
    <property type="project" value="UniProtKB-KW"/>
</dbReference>
<dbReference type="GO" id="GO:0005524">
    <property type="term" value="F:ATP binding"/>
    <property type="evidence" value="ECO:0007669"/>
    <property type="project" value="UniProtKB-KW"/>
</dbReference>
<dbReference type="GO" id="GO:0016887">
    <property type="term" value="F:ATP hydrolysis activity"/>
    <property type="evidence" value="ECO:0007669"/>
    <property type="project" value="InterPro"/>
</dbReference>
<dbReference type="GO" id="GO:0140662">
    <property type="term" value="F:ATP-dependent protein folding chaperone"/>
    <property type="evidence" value="ECO:0007669"/>
    <property type="project" value="InterPro"/>
</dbReference>
<dbReference type="GO" id="GO:0051082">
    <property type="term" value="F:unfolded protein binding"/>
    <property type="evidence" value="ECO:0007669"/>
    <property type="project" value="InterPro"/>
</dbReference>
<dbReference type="CDD" id="cd03341">
    <property type="entry name" value="TCP1_theta"/>
    <property type="match status" value="1"/>
</dbReference>
<dbReference type="FunFam" id="1.10.560.10:FF:000083">
    <property type="entry name" value="T-complex protein 1 subunit theta"/>
    <property type="match status" value="1"/>
</dbReference>
<dbReference type="FunFam" id="3.50.7.10:FF:000008">
    <property type="entry name" value="T-complex protein 1 subunit theta"/>
    <property type="match status" value="1"/>
</dbReference>
<dbReference type="Gene3D" id="3.50.7.10">
    <property type="entry name" value="GroEL"/>
    <property type="match status" value="1"/>
</dbReference>
<dbReference type="Gene3D" id="1.10.560.10">
    <property type="entry name" value="GroEL-like equatorial domain"/>
    <property type="match status" value="1"/>
</dbReference>
<dbReference type="Gene3D" id="3.30.260.10">
    <property type="entry name" value="TCP-1-like chaperonin intermediate domain"/>
    <property type="match status" value="1"/>
</dbReference>
<dbReference type="InterPro" id="IPR012721">
    <property type="entry name" value="Chap_CCT_theta"/>
</dbReference>
<dbReference type="InterPro" id="IPR017998">
    <property type="entry name" value="Chaperone_TCP-1"/>
</dbReference>
<dbReference type="InterPro" id="IPR002194">
    <property type="entry name" value="Chaperonin_TCP-1_CS"/>
</dbReference>
<dbReference type="InterPro" id="IPR002423">
    <property type="entry name" value="Cpn60/GroEL/TCP-1"/>
</dbReference>
<dbReference type="InterPro" id="IPR027409">
    <property type="entry name" value="GroEL-like_apical_dom_sf"/>
</dbReference>
<dbReference type="InterPro" id="IPR027413">
    <property type="entry name" value="GROEL-like_equatorial_sf"/>
</dbReference>
<dbReference type="InterPro" id="IPR027410">
    <property type="entry name" value="TCP-1-like_intermed_sf"/>
</dbReference>
<dbReference type="NCBIfam" id="TIGR02346">
    <property type="entry name" value="chap_CCT_theta"/>
    <property type="match status" value="1"/>
</dbReference>
<dbReference type="PANTHER" id="PTHR11353">
    <property type="entry name" value="CHAPERONIN"/>
    <property type="match status" value="1"/>
</dbReference>
<dbReference type="Pfam" id="PF00118">
    <property type="entry name" value="Cpn60_TCP1"/>
    <property type="match status" value="1"/>
</dbReference>
<dbReference type="PRINTS" id="PR00304">
    <property type="entry name" value="TCOMPLEXTCP1"/>
</dbReference>
<dbReference type="SUPFAM" id="SSF52029">
    <property type="entry name" value="GroEL apical domain-like"/>
    <property type="match status" value="1"/>
</dbReference>
<dbReference type="SUPFAM" id="SSF48592">
    <property type="entry name" value="GroEL equatorial domain-like"/>
    <property type="match status" value="1"/>
</dbReference>
<dbReference type="SUPFAM" id="SSF54849">
    <property type="entry name" value="GroEL-intermediate domain like"/>
    <property type="match status" value="1"/>
</dbReference>
<dbReference type="PROSITE" id="PS00750">
    <property type="entry name" value="TCP1_1"/>
    <property type="match status" value="1"/>
</dbReference>
<dbReference type="PROSITE" id="PS00751">
    <property type="entry name" value="TCP1_2"/>
    <property type="match status" value="1"/>
</dbReference>
<dbReference type="PROSITE" id="PS00995">
    <property type="entry name" value="TCP1_3"/>
    <property type="match status" value="1"/>
</dbReference>
<feature type="initiator methionine" description="Removed" evidence="2">
    <location>
        <position position="1"/>
    </location>
</feature>
<feature type="chain" id="PRO_0000273200" description="T-complex protein 1 subunit theta">
    <location>
        <begin position="2"/>
        <end position="548"/>
    </location>
</feature>
<feature type="region of interest" description="Disordered" evidence="3">
    <location>
        <begin position="529"/>
        <end position="548"/>
    </location>
</feature>
<feature type="binding site" evidence="2">
    <location>
        <position position="47"/>
    </location>
    <ligand>
        <name>ADP</name>
        <dbReference type="ChEBI" id="CHEBI:456216"/>
    </ligand>
</feature>
<feature type="binding site" evidence="2">
    <location>
        <position position="48"/>
    </location>
    <ligand>
        <name>ADP</name>
        <dbReference type="ChEBI" id="CHEBI:456216"/>
    </ligand>
</feature>
<feature type="binding site" evidence="2">
    <location>
        <position position="99"/>
    </location>
    <ligand>
        <name>Mg(2+)</name>
        <dbReference type="ChEBI" id="CHEBI:18420"/>
    </ligand>
</feature>
<feature type="binding site" evidence="2">
    <location>
        <position position="100"/>
    </location>
    <ligand>
        <name>ADP</name>
        <dbReference type="ChEBI" id="CHEBI:456216"/>
    </ligand>
</feature>
<feature type="binding site" evidence="2">
    <location>
        <position position="100"/>
    </location>
    <ligand>
        <name>ATP</name>
        <dbReference type="ChEBI" id="CHEBI:30616"/>
    </ligand>
</feature>
<feature type="binding site" evidence="2">
    <location>
        <position position="101"/>
    </location>
    <ligand>
        <name>ADP</name>
        <dbReference type="ChEBI" id="CHEBI:456216"/>
    </ligand>
</feature>
<feature type="binding site" evidence="2">
    <location>
        <position position="101"/>
    </location>
    <ligand>
        <name>ATP</name>
        <dbReference type="ChEBI" id="CHEBI:30616"/>
    </ligand>
</feature>
<feature type="binding site" evidence="2">
    <location>
        <position position="102"/>
    </location>
    <ligand>
        <name>ADP</name>
        <dbReference type="ChEBI" id="CHEBI:456216"/>
    </ligand>
</feature>
<feature type="binding site" evidence="2">
    <location>
        <position position="102"/>
    </location>
    <ligand>
        <name>ATP</name>
        <dbReference type="ChEBI" id="CHEBI:30616"/>
    </ligand>
</feature>
<feature type="binding site" evidence="2">
    <location>
        <position position="103"/>
    </location>
    <ligand>
        <name>ADP</name>
        <dbReference type="ChEBI" id="CHEBI:456216"/>
    </ligand>
</feature>
<feature type="binding site" evidence="2">
    <location>
        <position position="169"/>
    </location>
    <ligand>
        <name>ADP</name>
        <dbReference type="ChEBI" id="CHEBI:456216"/>
    </ligand>
</feature>
<feature type="binding site" evidence="2">
    <location>
        <position position="170"/>
    </location>
    <ligand>
        <name>ADP</name>
        <dbReference type="ChEBI" id="CHEBI:456216"/>
    </ligand>
</feature>
<feature type="binding site" evidence="2">
    <location>
        <position position="170"/>
    </location>
    <ligand>
        <name>ATP</name>
        <dbReference type="ChEBI" id="CHEBI:30616"/>
    </ligand>
</feature>
<feature type="binding site" evidence="2">
    <location>
        <position position="171"/>
    </location>
    <ligand>
        <name>ADP</name>
        <dbReference type="ChEBI" id="CHEBI:456216"/>
    </ligand>
</feature>
<feature type="binding site" evidence="2">
    <location>
        <position position="171"/>
    </location>
    <ligand>
        <name>ATP</name>
        <dbReference type="ChEBI" id="CHEBI:30616"/>
    </ligand>
</feature>
<feature type="binding site" evidence="2">
    <location>
        <position position="412"/>
    </location>
    <ligand>
        <name>ADP</name>
        <dbReference type="ChEBI" id="CHEBI:456216"/>
    </ligand>
</feature>
<feature type="binding site" evidence="2">
    <location>
        <position position="412"/>
    </location>
    <ligand>
        <name>ATP</name>
        <dbReference type="ChEBI" id="CHEBI:30616"/>
    </ligand>
</feature>
<feature type="binding site" evidence="2">
    <location>
        <position position="499"/>
    </location>
    <ligand>
        <name>ADP</name>
        <dbReference type="ChEBI" id="CHEBI:456216"/>
    </ligand>
</feature>
<feature type="binding site" evidence="2">
    <location>
        <position position="499"/>
    </location>
    <ligand>
        <name>ATP</name>
        <dbReference type="ChEBI" id="CHEBI:30616"/>
    </ligand>
</feature>
<feature type="binding site" evidence="2">
    <location>
        <position position="504"/>
    </location>
    <ligand>
        <name>ATP</name>
        <dbReference type="ChEBI" id="CHEBI:30616"/>
    </ligand>
</feature>
<feature type="modified residue" description="N-acetylalanine" evidence="2">
    <location>
        <position position="2"/>
    </location>
</feature>
<feature type="modified residue" description="Phosphoserine" evidence="2">
    <location>
        <position position="23"/>
    </location>
</feature>
<feature type="modified residue" description="Phosphotyrosine" evidence="2">
    <location>
        <position position="30"/>
    </location>
</feature>
<feature type="modified residue" description="Phosphoserine" evidence="2">
    <location>
        <position position="162"/>
    </location>
</feature>
<feature type="modified residue" description="Phosphoserine" evidence="2">
    <location>
        <position position="213"/>
    </location>
</feature>
<feature type="modified residue" description="Phosphoserine" evidence="2">
    <location>
        <position position="269"/>
    </location>
</feature>
<feature type="modified residue" description="Phosphoserine" evidence="2">
    <location>
        <position position="317"/>
    </location>
</feature>
<feature type="modified residue" description="N6-acetyllysine" evidence="2">
    <location>
        <position position="318"/>
    </location>
</feature>
<feature type="modified residue" description="N6-acetyllysine" evidence="2">
    <location>
        <position position="400"/>
    </location>
</feature>
<feature type="modified residue" description="N6-acetyllysine" evidence="2">
    <location>
        <position position="466"/>
    </location>
</feature>
<feature type="modified residue" description="Phosphotyrosine" evidence="2">
    <location>
        <position position="505"/>
    </location>
</feature>
<feature type="modified residue" description="Phosphoserine" evidence="2">
    <location>
        <position position="537"/>
    </location>
</feature>
<feature type="cross-link" description="Glycyl lysine isopeptide (Lys-Gly) (interchain with G-Cter in SUMO2)" evidence="2">
    <location>
        <position position="224"/>
    </location>
</feature>
<feature type="cross-link" description="Glycyl lysine isopeptide (Lys-Gly) (interchain with G-Cter in SUMO2)" evidence="2">
    <location>
        <position position="254"/>
    </location>
</feature>
<feature type="cross-link" description="Glycyl lysine isopeptide (Lys-Gly) (interchain with G-Cter in SUMO2)" evidence="2">
    <location>
        <position position="260"/>
    </location>
</feature>
<feature type="cross-link" description="Glycyl lysine isopeptide (Lys-Gly) (interchain with G-Cter in SUMO1)" evidence="2">
    <location>
        <position position="459"/>
    </location>
</feature>
<feature type="cross-link" description="Glycyl lysine isopeptide (Lys-Gly) (interchain with G-Cter in SUMO2)" evidence="2">
    <location>
        <position position="534"/>
    </location>
</feature>
<feature type="cross-link" description="Glycyl lysine isopeptide (Lys-Gly) (interchain with G-Cter in SUMO2)" evidence="2">
    <location>
        <position position="539"/>
    </location>
</feature>
<proteinExistence type="evidence at transcript level"/>
<accession>Q4R5J0</accession>
<name>TCPQ_MACFA</name>
<organism>
    <name type="scientific">Macaca fascicularis</name>
    <name type="common">Crab-eating macaque</name>
    <name type="synonym">Cynomolgus monkey</name>
    <dbReference type="NCBI Taxonomy" id="9541"/>
    <lineage>
        <taxon>Eukaryota</taxon>
        <taxon>Metazoa</taxon>
        <taxon>Chordata</taxon>
        <taxon>Craniata</taxon>
        <taxon>Vertebrata</taxon>
        <taxon>Euteleostomi</taxon>
        <taxon>Mammalia</taxon>
        <taxon>Eutheria</taxon>
        <taxon>Euarchontoglires</taxon>
        <taxon>Primates</taxon>
        <taxon>Haplorrhini</taxon>
        <taxon>Catarrhini</taxon>
        <taxon>Cercopithecidae</taxon>
        <taxon>Cercopithecinae</taxon>
        <taxon>Macaca</taxon>
    </lineage>
</organism>
<evidence type="ECO:0000250" key="1">
    <source>
        <dbReference type="UniProtKB" id="P42932"/>
    </source>
</evidence>
<evidence type="ECO:0000250" key="2">
    <source>
        <dbReference type="UniProtKB" id="P50990"/>
    </source>
</evidence>
<evidence type="ECO:0000256" key="3">
    <source>
        <dbReference type="SAM" id="MobiDB-lite"/>
    </source>
</evidence>
<evidence type="ECO:0000305" key="4"/>
<gene>
    <name type="primary">CCT8</name>
    <name type="ORF">QflA-12463</name>
    <name type="ORF">QtsA-14677</name>
</gene>
<comment type="function">
    <text evidence="2">Component of the chaperonin-containing T-complex (TRiC), a molecular chaperone complex that assists the folding of actin, tubulin and other proteins upon ATP hydrolysis. The TRiC complex mediates the folding of WRAP53/TCAB1, thereby regulating telomere maintenance. As part of the TRiC complex may play a role in the assembly of BBSome, a complex involved in ciliogenesis regulating transports vesicles to the cilia.</text>
</comment>
<comment type="catalytic activity">
    <reaction evidence="2">
        <text>ATP + H2O = ADP + phosphate + H(+)</text>
        <dbReference type="Rhea" id="RHEA:13065"/>
        <dbReference type="ChEBI" id="CHEBI:15377"/>
        <dbReference type="ChEBI" id="CHEBI:15378"/>
        <dbReference type="ChEBI" id="CHEBI:30616"/>
        <dbReference type="ChEBI" id="CHEBI:43474"/>
        <dbReference type="ChEBI" id="CHEBI:456216"/>
    </reaction>
</comment>
<comment type="subunit">
    <text evidence="1 2">Component of the chaperonin-containing T-complex (TRiC), a hexadecamer composed of two identical back-to-back stacked rings enclosing a protein folding chamber. Each ring is made up of eight different subunits: TCP1/CCT1, CCT2, CCT3, CCT4, CCT5, CCT6A/CCT6, CCT7, CCT8. Interacts with PACRG (By similarity). Interacts with DNAAF4 (By similarity). Interacts with synaptic plasticity regulator PANTS (By similarity).</text>
</comment>
<comment type="subcellular location">
    <subcellularLocation>
        <location evidence="2">Cytoplasm</location>
    </subcellularLocation>
    <subcellularLocation>
        <location evidence="2">Cytoplasm</location>
        <location evidence="2">Cytoskeleton</location>
        <location evidence="2">Microtubule organizing center</location>
        <location evidence="2">Centrosome</location>
    </subcellularLocation>
    <subcellularLocation>
        <location evidence="1">Cytoplasm</location>
        <location evidence="1">Cytoskeleton</location>
        <location evidence="1">Cilium basal body</location>
    </subcellularLocation>
</comment>
<comment type="similarity">
    <text evidence="4">Belongs to the TCP-1 chaperonin family.</text>
</comment>
<reference key="1">
    <citation type="submission" date="2005-06" db="EMBL/GenBank/DDBJ databases">
        <title>DNA sequences of macaque genes expressed in brain or testis and its evolutionary implications.</title>
        <authorList>
            <consortium name="International consortium for macaque cDNA sequencing and analysis"/>
        </authorList>
    </citation>
    <scope>NUCLEOTIDE SEQUENCE [LARGE SCALE MRNA]</scope>
    <source>
        <tissue>Frontal cortex</tissue>
        <tissue>Testis</tissue>
    </source>
</reference>
<sequence length="548" mass="59516">MALHVPKAPGFAQMLKEGAKHFSGLEEAVYRNIQACKELAQTTRTAYGPNGMNKMVINHLEKLFVTNDAATILRELEVQHPAAKMIVMASHMQEQEVGDGTNFVLVFAGALLELAEELLRIGLSVSEVIEGYEIACRKAHEILPNLVCCSAKNLRDVDEVSSLLRTSIMSKQYGNEVFLAKLIAQACVSIFPDSGHFNVDNIRVCKILGSGISSSSVLHGMVFKKETEGDVTSVKDAKIAVYSCPFDGTITETKGTVLIKTAEELMNFSKGEENLMDAQVKAIADTGANVVVTGGKVADMALHYANKYNIMLVRLNSKWDLRRLCKTVGATALPRLTPPVLEEMGHCDSVCLSEVGDTQVVVFKHEKEDGAISTIVLRGSTDNLMDDIERAVDDGVNTFKVLTRDKRLVPGGGATEIELAKQITSYGETCPGLEQYAIKKFAEAFEAIPRALAENSGVKANEVISKLYAVHQEGNKNVGLDIEAEVPAVKDMLEAGILDTYLGKYWAIKLATNAAVTVLRVDQIIMAKPAGGPKPPSGKKDWDDDQND</sequence>
<keyword id="KW-0007">Acetylation</keyword>
<keyword id="KW-0067">ATP-binding</keyword>
<keyword id="KW-0966">Cell projection</keyword>
<keyword id="KW-0143">Chaperone</keyword>
<keyword id="KW-0969">Cilium</keyword>
<keyword id="KW-0963">Cytoplasm</keyword>
<keyword id="KW-0206">Cytoskeleton</keyword>
<keyword id="KW-0378">Hydrolase</keyword>
<keyword id="KW-1017">Isopeptide bond</keyword>
<keyword id="KW-0460">Magnesium</keyword>
<keyword id="KW-0479">Metal-binding</keyword>
<keyword id="KW-0547">Nucleotide-binding</keyword>
<keyword id="KW-0597">Phosphoprotein</keyword>
<keyword id="KW-1185">Reference proteome</keyword>
<keyword id="KW-0832">Ubl conjugation</keyword>